<organism>
    <name type="scientific">Oryza sativa subsp. japonica</name>
    <name type="common">Rice</name>
    <dbReference type="NCBI Taxonomy" id="39947"/>
    <lineage>
        <taxon>Eukaryota</taxon>
        <taxon>Viridiplantae</taxon>
        <taxon>Streptophyta</taxon>
        <taxon>Embryophyta</taxon>
        <taxon>Tracheophyta</taxon>
        <taxon>Spermatophyta</taxon>
        <taxon>Magnoliopsida</taxon>
        <taxon>Liliopsida</taxon>
        <taxon>Poales</taxon>
        <taxon>Poaceae</taxon>
        <taxon>BOP clade</taxon>
        <taxon>Oryzoideae</taxon>
        <taxon>Oryzeae</taxon>
        <taxon>Oryzinae</taxon>
        <taxon>Oryza</taxon>
        <taxon>Oryza sativa</taxon>
    </lineage>
</organism>
<comment type="catalytic activity">
    <reaction>
        <text>Hydrolysis of terminal non-reducing beta-D-galactose residues in beta-D-galactosides.</text>
        <dbReference type="EC" id="3.2.1.23"/>
    </reaction>
</comment>
<comment type="subcellular location">
    <subcellularLocation>
        <location evidence="3">Secreted</location>
        <location evidence="3">Extracellular space</location>
        <location evidence="3">Apoplast</location>
    </subcellularLocation>
</comment>
<comment type="similarity">
    <text evidence="3">Belongs to the glycosyl hydrolase 35 family.</text>
</comment>
<keyword id="KW-0052">Apoplast</keyword>
<keyword id="KW-0325">Glycoprotein</keyword>
<keyword id="KW-0326">Glycosidase</keyword>
<keyword id="KW-0378">Hydrolase</keyword>
<keyword id="KW-1185">Reference proteome</keyword>
<keyword id="KW-0964">Secreted</keyword>
<keyword id="KW-0732">Signal</keyword>
<gene>
    <name type="ordered locus">Os01g0580200</name>
    <name type="ordered locus">LOC_Os01g39830</name>
    <name type="ORF">P0672C09.21</name>
</gene>
<protein>
    <recommendedName>
        <fullName>Beta-galactosidase 2</fullName>
        <shortName>Lactase 2</shortName>
        <ecNumber>3.2.1.23</ecNumber>
    </recommendedName>
</protein>
<sequence>MAASAVAVAFVVAVAAVLAAAASAAVTYDRKAVVVNGQRRILISGSIHYPRSTPEMWPDLIEKAKDGGLDVVQTYVFWNGHEPSPGQYYFEGRYDLVHFIKLVKQAGLYVNLRIGPYVCAEWNFGGFPVWLKYVPGISFRTDNEPFKAEMQKFTTKIVEMMKSEGLFEWQGGPIILSQIENEFGPLEWDQGEPAKAYASWAANMAVALNTSVPWIMCKEDDAPDPIINTCNGFYCDWFSPNKPHKPTMWTEAWTAWYTGFGIPVPHRPVEDLAYGVAKFIQKGGSFVNYYMYHGGTNFGRTAGGPFIATSYDYDAPIDEYGLLREPKWGHLKQLHKAIKLCEPALVAGDPIVTSLGNAQKSSVFRSSTGACAAFLENKDKVSYARVAFNGMHYDLPPWSISILPDCKTTVFNTARVGSQISQMKMEWAGGFAWQSYNEEINSFGEDPLTTVGLLEQINVTRDNTDYLWYTTYVDVAQDEQFLSNGENLKLTVMSAGHALHIFINGQLKGTVYGSVDDPKLTYTGNVKLWAGSNTISCLSIAVGLPNVGEHFETWNAGILGPVTLDGLNEGRRDLTWQKWTYQVGLKGESMSLHSLSGSSTVEWGEPVQKQPLTWYKAFFNAPDGDEPLALDMSSMGKGQIWINGQGIGRYWPGYKASGNCGTCDYRGEYDETKCQTNCGDSSQRWYHVPRSWLSPTGNLLVIFEEWGGDPTGISMVKRSIGSVCADVSEWQPSMKNWHTKDYEKAKVHLQCDNGQKITEIKFASFGTPQGSCGSYTEGGCHAHKSYDIFWKNCVGQERCGVSVVPEIFGGDPCPGTMKRAVVEAICG</sequence>
<proteinExistence type="evidence at transcript level"/>
<feature type="signal peptide" evidence="1">
    <location>
        <begin position="1"/>
        <end position="24"/>
    </location>
</feature>
<feature type="chain" id="PRO_0000294153" description="Beta-galactosidase 2">
    <location>
        <begin position="25"/>
        <end position="827"/>
    </location>
</feature>
<feature type="domain" description="SUEL-type lectin" evidence="2">
    <location>
        <begin position="741"/>
        <end position="827"/>
    </location>
</feature>
<feature type="active site" description="Proton donor" evidence="1">
    <location>
        <position position="182"/>
    </location>
</feature>
<feature type="active site" description="Nucleophile" evidence="1">
    <location>
        <position position="251"/>
    </location>
</feature>
<feature type="glycosylation site" description="N-linked (GlcNAc...) asparagine" evidence="1">
    <location>
        <position position="209"/>
    </location>
</feature>
<feature type="glycosylation site" description="N-linked (GlcNAc...) asparagine" evidence="1">
    <location>
        <position position="458"/>
    </location>
</feature>
<name>BGAL2_ORYSJ</name>
<dbReference type="EC" id="3.2.1.23"/>
<dbReference type="EMBL" id="AP003546">
    <property type="protein sequence ID" value="BAB84455.1"/>
    <property type="molecule type" value="Genomic_DNA"/>
</dbReference>
<dbReference type="EMBL" id="AP008207">
    <property type="protein sequence ID" value="BAF05319.1"/>
    <property type="molecule type" value="Genomic_DNA"/>
</dbReference>
<dbReference type="EMBL" id="AP014957">
    <property type="protein sequence ID" value="BAS72858.1"/>
    <property type="molecule type" value="Genomic_DNA"/>
</dbReference>
<dbReference type="EMBL" id="AK103045">
    <property type="protein sequence ID" value="BAG95853.1"/>
    <property type="molecule type" value="mRNA"/>
</dbReference>
<dbReference type="RefSeq" id="XP_015621619.1">
    <property type="nucleotide sequence ID" value="XM_015766133.1"/>
</dbReference>
<dbReference type="SMR" id="Q8W0A1"/>
<dbReference type="FunCoup" id="Q8W0A1">
    <property type="interactions" value="357"/>
</dbReference>
<dbReference type="STRING" id="39947.Q8W0A1"/>
<dbReference type="CAZy" id="GH35">
    <property type="family name" value="Glycoside Hydrolase Family 35"/>
</dbReference>
<dbReference type="PaxDb" id="39947-Q8W0A1"/>
<dbReference type="EnsemblPlants" id="Os01t0580200-01">
    <property type="protein sequence ID" value="Os01t0580200-01"/>
    <property type="gene ID" value="Os01g0580200"/>
</dbReference>
<dbReference type="Gramene" id="Os01t0580200-01">
    <property type="protein sequence ID" value="Os01t0580200-01"/>
    <property type="gene ID" value="Os01g0580200"/>
</dbReference>
<dbReference type="KEGG" id="dosa:Os01g0580200"/>
<dbReference type="eggNOG" id="KOG0496">
    <property type="taxonomic scope" value="Eukaryota"/>
</dbReference>
<dbReference type="HOGENOM" id="CLU_007853_4_0_1"/>
<dbReference type="InParanoid" id="Q8W0A1"/>
<dbReference type="OMA" id="QSYNDEP"/>
<dbReference type="OrthoDB" id="1657402at2759"/>
<dbReference type="Proteomes" id="UP000000763">
    <property type="component" value="Chromosome 1"/>
</dbReference>
<dbReference type="Proteomes" id="UP000059680">
    <property type="component" value="Chromosome 1"/>
</dbReference>
<dbReference type="GO" id="GO:0048046">
    <property type="term" value="C:apoplast"/>
    <property type="evidence" value="ECO:0007669"/>
    <property type="project" value="UniProtKB-SubCell"/>
</dbReference>
<dbReference type="GO" id="GO:0009505">
    <property type="term" value="C:plant-type cell wall"/>
    <property type="evidence" value="ECO:0000318"/>
    <property type="project" value="GO_Central"/>
</dbReference>
<dbReference type="GO" id="GO:0005773">
    <property type="term" value="C:vacuole"/>
    <property type="evidence" value="ECO:0000318"/>
    <property type="project" value="GO_Central"/>
</dbReference>
<dbReference type="GO" id="GO:0004565">
    <property type="term" value="F:beta-galactosidase activity"/>
    <property type="evidence" value="ECO:0000318"/>
    <property type="project" value="GO_Central"/>
</dbReference>
<dbReference type="GO" id="GO:0030246">
    <property type="term" value="F:carbohydrate binding"/>
    <property type="evidence" value="ECO:0007669"/>
    <property type="project" value="InterPro"/>
</dbReference>
<dbReference type="GO" id="GO:0019388">
    <property type="term" value="P:galactose catabolic process"/>
    <property type="evidence" value="ECO:0000318"/>
    <property type="project" value="GO_Central"/>
</dbReference>
<dbReference type="GO" id="GO:0009827">
    <property type="term" value="P:plant-type cell wall modification"/>
    <property type="evidence" value="ECO:0000318"/>
    <property type="project" value="GO_Central"/>
</dbReference>
<dbReference type="CDD" id="cd22842">
    <property type="entry name" value="Gal_Rha_Lectin_BGal"/>
    <property type="match status" value="1"/>
</dbReference>
<dbReference type="FunFam" id="2.60.120.260:FF:000061">
    <property type="entry name" value="Beta-galactosidase"/>
    <property type="match status" value="1"/>
</dbReference>
<dbReference type="FunFam" id="2.60.120.260:FF:000076">
    <property type="entry name" value="Beta-galactosidase"/>
    <property type="match status" value="1"/>
</dbReference>
<dbReference type="FunFam" id="2.60.120.260:FF:000142">
    <property type="entry name" value="Beta-galactosidase"/>
    <property type="match status" value="1"/>
</dbReference>
<dbReference type="FunFam" id="2.60.120.740:FF:000002">
    <property type="entry name" value="Beta-galactosidase"/>
    <property type="match status" value="1"/>
</dbReference>
<dbReference type="FunFam" id="3.20.20.80:FF:000021">
    <property type="entry name" value="Beta-galactosidase"/>
    <property type="match status" value="1"/>
</dbReference>
<dbReference type="Gene3D" id="2.60.120.740">
    <property type="match status" value="1"/>
</dbReference>
<dbReference type="Gene3D" id="2.60.120.260">
    <property type="entry name" value="Galactose-binding domain-like"/>
    <property type="match status" value="2"/>
</dbReference>
<dbReference type="Gene3D" id="3.20.20.80">
    <property type="entry name" value="Glycosidases"/>
    <property type="match status" value="1"/>
</dbReference>
<dbReference type="InterPro" id="IPR048913">
    <property type="entry name" value="BetaGal_gal-bd"/>
</dbReference>
<dbReference type="InterPro" id="IPR008979">
    <property type="entry name" value="Galactose-bd-like_sf"/>
</dbReference>
<dbReference type="InterPro" id="IPR041392">
    <property type="entry name" value="GHD"/>
</dbReference>
<dbReference type="InterPro" id="IPR031330">
    <property type="entry name" value="Gly_Hdrlase_35_cat"/>
</dbReference>
<dbReference type="InterPro" id="IPR019801">
    <property type="entry name" value="Glyco_hydro_35_CS"/>
</dbReference>
<dbReference type="InterPro" id="IPR001944">
    <property type="entry name" value="Glycoside_Hdrlase_35"/>
</dbReference>
<dbReference type="InterPro" id="IPR017853">
    <property type="entry name" value="Glycoside_hydrolase_SF"/>
</dbReference>
<dbReference type="InterPro" id="IPR000922">
    <property type="entry name" value="Lectin_gal-bd_dom"/>
</dbReference>
<dbReference type="InterPro" id="IPR043159">
    <property type="entry name" value="Lectin_gal-bd_sf"/>
</dbReference>
<dbReference type="PANTHER" id="PTHR23421">
    <property type="entry name" value="BETA-GALACTOSIDASE RELATED"/>
    <property type="match status" value="1"/>
</dbReference>
<dbReference type="Pfam" id="PF21467">
    <property type="entry name" value="BetaGal_gal-bd"/>
    <property type="match status" value="2"/>
</dbReference>
<dbReference type="Pfam" id="PF17834">
    <property type="entry name" value="GHD"/>
    <property type="match status" value="1"/>
</dbReference>
<dbReference type="Pfam" id="PF01301">
    <property type="entry name" value="Glyco_hydro_35"/>
    <property type="match status" value="1"/>
</dbReference>
<dbReference type="Pfam" id="PF02140">
    <property type="entry name" value="SUEL_Lectin"/>
    <property type="match status" value="1"/>
</dbReference>
<dbReference type="PRINTS" id="PR00742">
    <property type="entry name" value="GLHYDRLASE35"/>
</dbReference>
<dbReference type="SUPFAM" id="SSF51445">
    <property type="entry name" value="(Trans)glycosidases"/>
    <property type="match status" value="1"/>
</dbReference>
<dbReference type="SUPFAM" id="SSF49785">
    <property type="entry name" value="Galactose-binding domain-like"/>
    <property type="match status" value="2"/>
</dbReference>
<dbReference type="PROSITE" id="PS01182">
    <property type="entry name" value="GLYCOSYL_HYDROL_F35"/>
    <property type="match status" value="1"/>
</dbReference>
<dbReference type="PROSITE" id="PS50228">
    <property type="entry name" value="SUEL_LECTIN"/>
    <property type="match status" value="1"/>
</dbReference>
<evidence type="ECO:0000255" key="1"/>
<evidence type="ECO:0000255" key="2">
    <source>
        <dbReference type="PROSITE-ProRule" id="PRU00260"/>
    </source>
</evidence>
<evidence type="ECO:0000305" key="3"/>
<accession>Q8W0A1</accession>
<accession>B7EU06</accession>
<reference key="1">
    <citation type="journal article" date="2002" name="Nature">
        <title>The genome sequence and structure of rice chromosome 1.</title>
        <authorList>
            <person name="Sasaki T."/>
            <person name="Matsumoto T."/>
            <person name="Yamamoto K."/>
            <person name="Sakata K."/>
            <person name="Baba T."/>
            <person name="Katayose Y."/>
            <person name="Wu J."/>
            <person name="Niimura Y."/>
            <person name="Cheng Z."/>
            <person name="Nagamura Y."/>
            <person name="Antonio B.A."/>
            <person name="Kanamori H."/>
            <person name="Hosokawa S."/>
            <person name="Masukawa M."/>
            <person name="Arikawa K."/>
            <person name="Chiden Y."/>
            <person name="Hayashi M."/>
            <person name="Okamoto M."/>
            <person name="Ando T."/>
            <person name="Aoki H."/>
            <person name="Arita K."/>
            <person name="Hamada M."/>
            <person name="Harada C."/>
            <person name="Hijishita S."/>
            <person name="Honda M."/>
            <person name="Ichikawa Y."/>
            <person name="Idonuma A."/>
            <person name="Iijima M."/>
            <person name="Ikeda M."/>
            <person name="Ikeno M."/>
            <person name="Ito S."/>
            <person name="Ito T."/>
            <person name="Ito Y."/>
            <person name="Ito Y."/>
            <person name="Iwabuchi A."/>
            <person name="Kamiya K."/>
            <person name="Karasawa W."/>
            <person name="Katagiri S."/>
            <person name="Kikuta A."/>
            <person name="Kobayashi N."/>
            <person name="Kono I."/>
            <person name="Machita K."/>
            <person name="Maehara T."/>
            <person name="Mizuno H."/>
            <person name="Mizubayashi T."/>
            <person name="Mukai Y."/>
            <person name="Nagasaki H."/>
            <person name="Nakashima M."/>
            <person name="Nakama Y."/>
            <person name="Nakamichi Y."/>
            <person name="Nakamura M."/>
            <person name="Namiki N."/>
            <person name="Negishi M."/>
            <person name="Ohta I."/>
            <person name="Ono N."/>
            <person name="Saji S."/>
            <person name="Sakai K."/>
            <person name="Shibata M."/>
            <person name="Shimokawa T."/>
            <person name="Shomura A."/>
            <person name="Song J."/>
            <person name="Takazaki Y."/>
            <person name="Terasawa K."/>
            <person name="Tsuji K."/>
            <person name="Waki K."/>
            <person name="Yamagata H."/>
            <person name="Yamane H."/>
            <person name="Yoshiki S."/>
            <person name="Yoshihara R."/>
            <person name="Yukawa K."/>
            <person name="Zhong H."/>
            <person name="Iwama H."/>
            <person name="Endo T."/>
            <person name="Ito H."/>
            <person name="Hahn J.H."/>
            <person name="Kim H.-I."/>
            <person name="Eun M.-Y."/>
            <person name="Yano M."/>
            <person name="Jiang J."/>
            <person name="Gojobori T."/>
        </authorList>
    </citation>
    <scope>NUCLEOTIDE SEQUENCE [LARGE SCALE GENOMIC DNA]</scope>
    <source>
        <strain>cv. Nipponbare</strain>
    </source>
</reference>
<reference key="2">
    <citation type="journal article" date="2005" name="Nature">
        <title>The map-based sequence of the rice genome.</title>
        <authorList>
            <consortium name="International rice genome sequencing project (IRGSP)"/>
        </authorList>
    </citation>
    <scope>NUCLEOTIDE SEQUENCE [LARGE SCALE GENOMIC DNA]</scope>
    <source>
        <strain>cv. Nipponbare</strain>
    </source>
</reference>
<reference key="3">
    <citation type="journal article" date="2008" name="Nucleic Acids Res.">
        <title>The rice annotation project database (RAP-DB): 2008 update.</title>
        <authorList>
            <consortium name="The rice annotation project (RAP)"/>
        </authorList>
    </citation>
    <scope>GENOME REANNOTATION</scope>
    <source>
        <strain>cv. Nipponbare</strain>
    </source>
</reference>
<reference key="4">
    <citation type="journal article" date="2013" name="Rice">
        <title>Improvement of the Oryza sativa Nipponbare reference genome using next generation sequence and optical map data.</title>
        <authorList>
            <person name="Kawahara Y."/>
            <person name="de la Bastide M."/>
            <person name="Hamilton J.P."/>
            <person name="Kanamori H."/>
            <person name="McCombie W.R."/>
            <person name="Ouyang S."/>
            <person name="Schwartz D.C."/>
            <person name="Tanaka T."/>
            <person name="Wu J."/>
            <person name="Zhou S."/>
            <person name="Childs K.L."/>
            <person name="Davidson R.M."/>
            <person name="Lin H."/>
            <person name="Quesada-Ocampo L."/>
            <person name="Vaillancourt B."/>
            <person name="Sakai H."/>
            <person name="Lee S.S."/>
            <person name="Kim J."/>
            <person name="Numa H."/>
            <person name="Itoh T."/>
            <person name="Buell C.R."/>
            <person name="Matsumoto T."/>
        </authorList>
    </citation>
    <scope>GENOME REANNOTATION</scope>
    <source>
        <strain>cv. Nipponbare</strain>
    </source>
</reference>
<reference key="5">
    <citation type="journal article" date="2003" name="Science">
        <title>Collection, mapping, and annotation of over 28,000 cDNA clones from japonica rice.</title>
        <authorList>
            <consortium name="The rice full-length cDNA consortium"/>
        </authorList>
    </citation>
    <scope>NUCLEOTIDE SEQUENCE [LARGE SCALE MRNA]</scope>
    <source>
        <strain>cv. Nipponbare</strain>
    </source>
</reference>